<organismHost>
    <name type="scientific">Cynomys gunnisoni</name>
    <name type="common">Gunnison's prairie dog</name>
    <name type="synonym">Spermophilus gunnisoni</name>
    <dbReference type="NCBI Taxonomy" id="45479"/>
</organismHost>
<organismHost>
    <name type="scientific">Cynomys leucurus</name>
    <name type="common">White-tailed prairie dog</name>
    <dbReference type="NCBI Taxonomy" id="99825"/>
</organismHost>
<organismHost>
    <name type="scientific">Cynomys ludovicianus</name>
    <name type="common">Black-tailed prairie dog</name>
    <dbReference type="NCBI Taxonomy" id="45480"/>
</organismHost>
<organismHost>
    <name type="scientific">Cynomys mexicanus</name>
    <name type="common">Mexican prairie dog</name>
    <dbReference type="NCBI Taxonomy" id="99826"/>
</organismHost>
<organismHost>
    <name type="scientific">Cynomys parvidens</name>
    <name type="common">Utah prairie dog</name>
    <dbReference type="NCBI Taxonomy" id="99827"/>
</organismHost>
<organismHost>
    <name type="scientific">Gliridae</name>
    <name type="common">dormice</name>
    <dbReference type="NCBI Taxonomy" id="30650"/>
</organismHost>
<organismHost>
    <name type="scientific">Heliosciurus ruwenzorii</name>
    <name type="common">Ruwenzori sun squirrel</name>
    <dbReference type="NCBI Taxonomy" id="226685"/>
</organismHost>
<organismHost>
    <name type="scientific">Homo sapiens</name>
    <name type="common">Human</name>
    <dbReference type="NCBI Taxonomy" id="9606"/>
</organismHost>
<organismHost>
    <name type="scientific">Mus musculus</name>
    <name type="common">Mouse</name>
    <dbReference type="NCBI Taxonomy" id="10090"/>
</organismHost>
<keyword id="KW-1038">Host endoplasmic reticulum</keyword>
<keyword id="KW-1185">Reference proteome</keyword>
<protein>
    <recommendedName>
        <fullName>Protein OPG192</fullName>
    </recommendedName>
</protein>
<sequence>MYKKLITFLFVIGAVASYSNNEYTPFNKLSVKLYIDGVDNIENSYTDDNNELVLNFKEYTISIITESCDVGFDSIDIDVINDYKIIDMYTIDSSTIQRRGHTCRISTKLSCHYDKYPYIHKYEGDERQYSITAEGKCYKGIKYEISMMNDDTLLRKHTLKIGFTYIFDRHGHSNTYYSKYDF</sequence>
<accession>A0A7H0DNF4</accession>
<name>PG192_MONPV</name>
<gene>
    <name type="primary">OPG192</name>
    <name type="ORF">MPXVgp169</name>
</gene>
<comment type="subcellular location">
    <subcellularLocation>
        <location evidence="1">Host endoplasmic reticulum</location>
    </subcellularLocation>
</comment>
<comment type="similarity">
    <text evidence="2">Belongs to the orthopoxvirus OPG192 family.</text>
</comment>
<reference key="1">
    <citation type="journal article" date="2022" name="J. Infect. Dis.">
        <title>Exportation of Monkeypox virus from the African continent.</title>
        <authorList>
            <person name="Mauldin M.R."/>
            <person name="McCollum A.M."/>
            <person name="Nakazawa Y.J."/>
            <person name="Mandra A."/>
            <person name="Whitehouse E.R."/>
            <person name="Davidson W."/>
            <person name="Zhao H."/>
            <person name="Gao J."/>
            <person name="Li Y."/>
            <person name="Doty J."/>
            <person name="Yinka-Ogunleye A."/>
            <person name="Akinpelu A."/>
            <person name="Aruna O."/>
            <person name="Naidoo D."/>
            <person name="Lewandowski K."/>
            <person name="Afrough B."/>
            <person name="Graham V."/>
            <person name="Aarons E."/>
            <person name="Hewson R."/>
            <person name="Vipond R."/>
            <person name="Dunning J."/>
            <person name="Chand M."/>
            <person name="Brown C."/>
            <person name="Cohen-Gihon I."/>
            <person name="Erez N."/>
            <person name="Shifman O."/>
            <person name="Israeli O."/>
            <person name="Sharon M."/>
            <person name="Schwartz E."/>
            <person name="Beth-Din A."/>
            <person name="Zvi A."/>
            <person name="Mak T.M."/>
            <person name="Ng Y.K."/>
            <person name="Cui L."/>
            <person name="Lin R.T.P."/>
            <person name="Olson V.A."/>
            <person name="Brooks T."/>
            <person name="Paran N."/>
            <person name="Ihekweazu C."/>
            <person name="Reynolds M.G."/>
        </authorList>
    </citation>
    <scope>NUCLEOTIDE SEQUENCE [LARGE SCALE GENOMIC DNA]</scope>
    <source>
        <strain>MPXV-M5312_HM12_Rivers</strain>
    </source>
</reference>
<feature type="chain" id="PRO_0000457599" description="Protein OPG192">
    <location>
        <begin position="1"/>
        <end position="182"/>
    </location>
</feature>
<proteinExistence type="inferred from homology"/>
<organism>
    <name type="scientific">Monkeypox virus</name>
    <dbReference type="NCBI Taxonomy" id="10244"/>
    <lineage>
        <taxon>Viruses</taxon>
        <taxon>Varidnaviria</taxon>
        <taxon>Bamfordvirae</taxon>
        <taxon>Nucleocytoviricota</taxon>
        <taxon>Pokkesviricetes</taxon>
        <taxon>Chitovirales</taxon>
        <taxon>Poxviridae</taxon>
        <taxon>Chordopoxvirinae</taxon>
        <taxon>Orthopoxvirus</taxon>
    </lineage>
</organism>
<evidence type="ECO:0000250" key="1">
    <source>
        <dbReference type="UniProtKB" id="P68444"/>
    </source>
</evidence>
<evidence type="ECO:0000305" key="2"/>
<dbReference type="EMBL" id="MT903340">
    <property type="protein sequence ID" value="QNP13037.1"/>
    <property type="molecule type" value="Genomic_DNA"/>
</dbReference>
<dbReference type="RefSeq" id="YP_010377164.1">
    <property type="nucleotide sequence ID" value="NC_063383.1"/>
</dbReference>
<dbReference type="GeneID" id="72551578"/>
<dbReference type="Proteomes" id="UP000516359">
    <property type="component" value="Genome"/>
</dbReference>
<dbReference type="GO" id="GO:0044165">
    <property type="term" value="C:host cell endoplasmic reticulum"/>
    <property type="evidence" value="ECO:0007669"/>
    <property type="project" value="UniProtKB-SubCell"/>
</dbReference>
<dbReference type="InterPro" id="IPR010806">
    <property type="entry name" value="Poxvirus_TNF-rcpt-II_C"/>
</dbReference>
<dbReference type="InterPro" id="IPR009176">
    <property type="entry name" value="Vaccinia_virus_B7/C8"/>
</dbReference>
<dbReference type="Pfam" id="PF07190">
    <property type="entry name" value="CrmD_SECRET"/>
    <property type="match status" value="1"/>
</dbReference>
<dbReference type="PIRSF" id="PIRSF003778">
    <property type="entry name" value="VAC_C8L"/>
    <property type="match status" value="1"/>
</dbReference>